<name>RL35_FRATN</name>
<dbReference type="EMBL" id="CP000439">
    <property type="protein sequence ID" value="ABK90075.1"/>
    <property type="molecule type" value="Genomic_DNA"/>
</dbReference>
<dbReference type="RefSeq" id="WP_003034330.1">
    <property type="nucleotide sequence ID" value="NZ_CP009633.1"/>
</dbReference>
<dbReference type="SMR" id="A0Q760"/>
<dbReference type="GeneID" id="93255913"/>
<dbReference type="KEGG" id="ftn:FTN_1189"/>
<dbReference type="KEGG" id="ftx:AW25_818"/>
<dbReference type="BioCyc" id="FTUL401614:G1G75-1232-MONOMER"/>
<dbReference type="Proteomes" id="UP000000762">
    <property type="component" value="Chromosome"/>
</dbReference>
<dbReference type="GO" id="GO:0022625">
    <property type="term" value="C:cytosolic large ribosomal subunit"/>
    <property type="evidence" value="ECO:0007669"/>
    <property type="project" value="TreeGrafter"/>
</dbReference>
<dbReference type="GO" id="GO:0003735">
    <property type="term" value="F:structural constituent of ribosome"/>
    <property type="evidence" value="ECO:0007669"/>
    <property type="project" value="InterPro"/>
</dbReference>
<dbReference type="GO" id="GO:0006412">
    <property type="term" value="P:translation"/>
    <property type="evidence" value="ECO:0007669"/>
    <property type="project" value="UniProtKB-UniRule"/>
</dbReference>
<dbReference type="FunFam" id="4.10.410.60:FF:000001">
    <property type="entry name" value="50S ribosomal protein L35"/>
    <property type="match status" value="1"/>
</dbReference>
<dbReference type="Gene3D" id="4.10.410.60">
    <property type="match status" value="1"/>
</dbReference>
<dbReference type="HAMAP" id="MF_00514">
    <property type="entry name" value="Ribosomal_bL35"/>
    <property type="match status" value="1"/>
</dbReference>
<dbReference type="InterPro" id="IPR001706">
    <property type="entry name" value="Ribosomal_bL35"/>
</dbReference>
<dbReference type="InterPro" id="IPR021137">
    <property type="entry name" value="Ribosomal_bL35-like"/>
</dbReference>
<dbReference type="InterPro" id="IPR018265">
    <property type="entry name" value="Ribosomal_bL35_CS"/>
</dbReference>
<dbReference type="InterPro" id="IPR037229">
    <property type="entry name" value="Ribosomal_bL35_sf"/>
</dbReference>
<dbReference type="NCBIfam" id="TIGR00001">
    <property type="entry name" value="rpmI_bact"/>
    <property type="match status" value="1"/>
</dbReference>
<dbReference type="PANTHER" id="PTHR33343">
    <property type="entry name" value="54S RIBOSOMAL PROTEIN BL35M"/>
    <property type="match status" value="1"/>
</dbReference>
<dbReference type="PANTHER" id="PTHR33343:SF1">
    <property type="entry name" value="LARGE RIBOSOMAL SUBUNIT PROTEIN BL35M"/>
    <property type="match status" value="1"/>
</dbReference>
<dbReference type="Pfam" id="PF01632">
    <property type="entry name" value="Ribosomal_L35p"/>
    <property type="match status" value="1"/>
</dbReference>
<dbReference type="PRINTS" id="PR00064">
    <property type="entry name" value="RIBOSOMALL35"/>
</dbReference>
<dbReference type="SUPFAM" id="SSF143034">
    <property type="entry name" value="L35p-like"/>
    <property type="match status" value="1"/>
</dbReference>
<dbReference type="PROSITE" id="PS00936">
    <property type="entry name" value="RIBOSOMAL_L35"/>
    <property type="match status" value="1"/>
</dbReference>
<proteinExistence type="inferred from homology"/>
<feature type="chain" id="PRO_1000050692" description="Large ribosomal subunit protein bL35">
    <location>
        <begin position="1"/>
        <end position="65"/>
    </location>
</feature>
<feature type="region of interest" description="Disordered" evidence="2">
    <location>
        <begin position="1"/>
        <end position="22"/>
    </location>
</feature>
<reference key="1">
    <citation type="journal article" date="2007" name="Genome Biol.">
        <title>Comparison of Francisella tularensis genomes reveals evolutionary events associated with the emergence of human pathogenic strains.</title>
        <authorList>
            <person name="Rohmer L."/>
            <person name="Fong C."/>
            <person name="Abmayr S."/>
            <person name="Wasnick M."/>
            <person name="Larson Freeman T.J."/>
            <person name="Radey M."/>
            <person name="Guina T."/>
            <person name="Svensson K."/>
            <person name="Hayden H.S."/>
            <person name="Jacobs M."/>
            <person name="Gallagher L.A."/>
            <person name="Manoil C."/>
            <person name="Ernst R.K."/>
            <person name="Drees B."/>
            <person name="Buckley D."/>
            <person name="Haugen E."/>
            <person name="Bovee D."/>
            <person name="Zhou Y."/>
            <person name="Chang J."/>
            <person name="Levy R."/>
            <person name="Lim R."/>
            <person name="Gillett W."/>
            <person name="Guenthener D."/>
            <person name="Kang A."/>
            <person name="Shaffer S.A."/>
            <person name="Taylor G."/>
            <person name="Chen J."/>
            <person name="Gallis B."/>
            <person name="D'Argenio D.A."/>
            <person name="Forsman M."/>
            <person name="Olson M.V."/>
            <person name="Goodlett D.R."/>
            <person name="Kaul R."/>
            <person name="Miller S.I."/>
            <person name="Brittnacher M.J."/>
        </authorList>
    </citation>
    <scope>NUCLEOTIDE SEQUENCE [LARGE SCALE GENOMIC DNA]</scope>
    <source>
        <strain>U112</strain>
    </source>
</reference>
<sequence>MPKLKTKSGAAKRFKKTGKGGFKHRCANRAHINTKMTTKRKRHLRGMNQVAKVDTASLVQQMPYA</sequence>
<keyword id="KW-0687">Ribonucleoprotein</keyword>
<keyword id="KW-0689">Ribosomal protein</keyword>
<evidence type="ECO:0000255" key="1">
    <source>
        <dbReference type="HAMAP-Rule" id="MF_00514"/>
    </source>
</evidence>
<evidence type="ECO:0000256" key="2">
    <source>
        <dbReference type="SAM" id="MobiDB-lite"/>
    </source>
</evidence>
<evidence type="ECO:0000305" key="3"/>
<accession>A0Q760</accession>
<organism>
    <name type="scientific">Francisella tularensis subsp. novicida (strain U112)</name>
    <dbReference type="NCBI Taxonomy" id="401614"/>
    <lineage>
        <taxon>Bacteria</taxon>
        <taxon>Pseudomonadati</taxon>
        <taxon>Pseudomonadota</taxon>
        <taxon>Gammaproteobacteria</taxon>
        <taxon>Thiotrichales</taxon>
        <taxon>Francisellaceae</taxon>
        <taxon>Francisella</taxon>
    </lineage>
</organism>
<comment type="similarity">
    <text evidence="1">Belongs to the bacterial ribosomal protein bL35 family.</text>
</comment>
<gene>
    <name evidence="1" type="primary">rpmI</name>
    <name type="ordered locus">FTN_1189</name>
</gene>
<protein>
    <recommendedName>
        <fullName evidence="1">Large ribosomal subunit protein bL35</fullName>
    </recommendedName>
    <alternativeName>
        <fullName evidence="3">50S ribosomal protein L35</fullName>
    </alternativeName>
</protein>